<name>FARS_ARTAN</name>
<proteinExistence type="evidence at protein level"/>
<comment type="function">
    <text evidence="3">Sesquiterpene cyclase catalyzing the production of beta-farnesene from farnesyl diphosphate. Unable to use geranyl diphosphate as substrate.</text>
</comment>
<comment type="catalytic activity">
    <reaction evidence="3">
        <text>(2E,6E)-farnesyl diphosphate = (E)-beta-farnesene + diphosphate</text>
        <dbReference type="Rhea" id="RHEA:27425"/>
        <dbReference type="ChEBI" id="CHEBI:10418"/>
        <dbReference type="ChEBI" id="CHEBI:33019"/>
        <dbReference type="ChEBI" id="CHEBI:175763"/>
        <dbReference type="EC" id="4.2.3.47"/>
    </reaction>
</comment>
<comment type="cofactor">
    <cofactor evidence="3">
        <name>Mg(2+)</name>
        <dbReference type="ChEBI" id="CHEBI:18420"/>
    </cofactor>
    <cofactor evidence="3">
        <name>Co(2+)</name>
        <dbReference type="ChEBI" id="CHEBI:48828"/>
    </cofactor>
    <cofactor evidence="3">
        <name>Mn(2+)</name>
        <dbReference type="ChEBI" id="CHEBI:29035"/>
    </cofactor>
</comment>
<comment type="activity regulation">
    <text evidence="3">Strongly inhibited by manganese at concentration higher than 20 uM.</text>
</comment>
<comment type="biophysicochemical properties">
    <kinetics>
        <KM evidence="3">2.1 uM for (2E,6E)-farnesyl diphosphate</KM>
    </kinetics>
    <phDependence>
        <text evidence="3">Optimum pH is 6.5-7.5.</text>
    </phDependence>
</comment>
<comment type="pathway">
    <text>Secondary metabolite biosynthesis; terpenoid biosynthesis.</text>
</comment>
<comment type="subcellular location">
    <subcellularLocation>
        <location evidence="4">Cytoplasm</location>
    </subcellularLocation>
</comment>
<comment type="tissue specificity">
    <text evidence="2">Expressed in flowers.</text>
</comment>
<comment type="domain">
    <text>The Asp-Asp-Xaa-Xaa-Asp/Glu (DDXXD/E) motif is important for the catalytic activity, presumably through binding to Mg(2+).</text>
</comment>
<comment type="similarity">
    <text evidence="4">Belongs to the terpene synthase family.</text>
</comment>
<comment type="sequence caution" evidence="4">
    <conflict type="frameshift">
        <sequence resource="EMBL-CDS" id="AAX39387"/>
    </conflict>
</comment>
<protein>
    <recommendedName>
        <fullName>(E)-beta-farnesene synthase</fullName>
        <shortName>AaFS</shortName>
        <ecNumber>4.2.3.47</ecNumber>
    </recommendedName>
    <alternativeName>
        <fullName>Terpene synthase 10</fullName>
    </alternativeName>
</protein>
<dbReference type="EC" id="4.2.3.47"/>
<dbReference type="EMBL" id="AJ271792">
    <property type="protein sequence ID" value="CAC12731.1"/>
    <property type="molecule type" value="mRNA"/>
</dbReference>
<dbReference type="EMBL" id="AY835398">
    <property type="protein sequence ID" value="AAX39387.1"/>
    <property type="status" value="ALT_FRAME"/>
    <property type="molecule type" value="mRNA"/>
</dbReference>
<dbReference type="EMBL" id="EU252034">
    <property type="protein sequence ID" value="ABX09997.1"/>
    <property type="molecule type" value="mRNA"/>
</dbReference>
<dbReference type="SMR" id="Q9FXY7"/>
<dbReference type="BioCyc" id="MetaCyc:MONOMER-13549"/>
<dbReference type="BRENDA" id="4.2.3.47">
    <property type="organism ID" value="7150"/>
</dbReference>
<dbReference type="UniPathway" id="UPA00213"/>
<dbReference type="GO" id="GO:0005737">
    <property type="term" value="C:cytoplasm"/>
    <property type="evidence" value="ECO:0007669"/>
    <property type="project" value="UniProtKB-SubCell"/>
</dbReference>
<dbReference type="GO" id="GO:0000287">
    <property type="term" value="F:magnesium ion binding"/>
    <property type="evidence" value="ECO:0007669"/>
    <property type="project" value="InterPro"/>
</dbReference>
<dbReference type="GO" id="GO:0010333">
    <property type="term" value="F:terpene synthase activity"/>
    <property type="evidence" value="ECO:0007669"/>
    <property type="project" value="InterPro"/>
</dbReference>
<dbReference type="GO" id="GO:0016102">
    <property type="term" value="P:diterpenoid biosynthetic process"/>
    <property type="evidence" value="ECO:0007669"/>
    <property type="project" value="InterPro"/>
</dbReference>
<dbReference type="CDD" id="cd00684">
    <property type="entry name" value="Terpene_cyclase_plant_C1"/>
    <property type="match status" value="1"/>
</dbReference>
<dbReference type="FunFam" id="1.10.600.10:FF:000007">
    <property type="entry name" value="Isoprene synthase, chloroplastic"/>
    <property type="match status" value="1"/>
</dbReference>
<dbReference type="FunFam" id="1.50.10.130:FF:000001">
    <property type="entry name" value="Isoprene synthase, chloroplastic"/>
    <property type="match status" value="1"/>
</dbReference>
<dbReference type="Gene3D" id="1.10.600.10">
    <property type="entry name" value="Farnesyl Diphosphate Synthase"/>
    <property type="match status" value="1"/>
</dbReference>
<dbReference type="Gene3D" id="1.50.10.130">
    <property type="entry name" value="Terpene synthase, N-terminal domain"/>
    <property type="match status" value="1"/>
</dbReference>
<dbReference type="InterPro" id="IPR008949">
    <property type="entry name" value="Isoprenoid_synthase_dom_sf"/>
</dbReference>
<dbReference type="InterPro" id="IPR034741">
    <property type="entry name" value="Terpene_cyclase-like_1_C"/>
</dbReference>
<dbReference type="InterPro" id="IPR044814">
    <property type="entry name" value="Terpene_cyclase_plant_C1"/>
</dbReference>
<dbReference type="InterPro" id="IPR001906">
    <property type="entry name" value="Terpene_synth_N"/>
</dbReference>
<dbReference type="InterPro" id="IPR036965">
    <property type="entry name" value="Terpene_synth_N_sf"/>
</dbReference>
<dbReference type="InterPro" id="IPR050148">
    <property type="entry name" value="Terpene_synthase-like"/>
</dbReference>
<dbReference type="InterPro" id="IPR005630">
    <property type="entry name" value="Terpene_synthase_metal-bd"/>
</dbReference>
<dbReference type="InterPro" id="IPR008930">
    <property type="entry name" value="Terpenoid_cyclase/PrenylTrfase"/>
</dbReference>
<dbReference type="PANTHER" id="PTHR31225">
    <property type="entry name" value="OS04G0344100 PROTEIN-RELATED"/>
    <property type="match status" value="1"/>
</dbReference>
<dbReference type="PANTHER" id="PTHR31225:SF202">
    <property type="entry name" value="TERPENOID CYCLASES_PROTEIN PRENYLTRANSFERASE ALPHA-ALPHA TOROID-RELATED"/>
    <property type="match status" value="1"/>
</dbReference>
<dbReference type="Pfam" id="PF01397">
    <property type="entry name" value="Terpene_synth"/>
    <property type="match status" value="1"/>
</dbReference>
<dbReference type="Pfam" id="PF03936">
    <property type="entry name" value="Terpene_synth_C"/>
    <property type="match status" value="1"/>
</dbReference>
<dbReference type="SFLD" id="SFLDS00005">
    <property type="entry name" value="Isoprenoid_Synthase_Type_I"/>
    <property type="match status" value="1"/>
</dbReference>
<dbReference type="SFLD" id="SFLDG01019">
    <property type="entry name" value="Terpene_Cyclase_Like_1_C_Termi"/>
    <property type="match status" value="1"/>
</dbReference>
<dbReference type="SUPFAM" id="SSF48239">
    <property type="entry name" value="Terpenoid cyclases/Protein prenyltransferases"/>
    <property type="match status" value="1"/>
</dbReference>
<dbReference type="SUPFAM" id="SSF48576">
    <property type="entry name" value="Terpenoid synthases"/>
    <property type="match status" value="1"/>
</dbReference>
<feature type="chain" id="PRO_0000402128" description="(E)-beta-farnesene synthase">
    <location>
        <begin position="1"/>
        <end position="577"/>
    </location>
</feature>
<feature type="short sequence motif" description="DDXXD motif">
    <location>
        <begin position="327"/>
        <end position="331"/>
    </location>
</feature>
<feature type="binding site" evidence="1">
    <location>
        <position position="327"/>
    </location>
    <ligand>
        <name>Mg(2+)</name>
        <dbReference type="ChEBI" id="CHEBI:18420"/>
        <label>1</label>
    </ligand>
</feature>
<feature type="binding site" evidence="1">
    <location>
        <position position="327"/>
    </location>
    <ligand>
        <name>Mg(2+)</name>
        <dbReference type="ChEBI" id="CHEBI:18420"/>
        <label>2</label>
    </ligand>
</feature>
<feature type="binding site" evidence="1">
    <location>
        <position position="331"/>
    </location>
    <ligand>
        <name>Mg(2+)</name>
        <dbReference type="ChEBI" id="CHEBI:18420"/>
        <label>1</label>
    </ligand>
</feature>
<feature type="binding site" evidence="1">
    <location>
        <position position="331"/>
    </location>
    <ligand>
        <name>Mg(2+)</name>
        <dbReference type="ChEBI" id="CHEBI:18420"/>
        <label>2</label>
    </ligand>
</feature>
<feature type="binding site" evidence="1">
    <location>
        <position position="474"/>
    </location>
    <ligand>
        <name>Mg(2+)</name>
        <dbReference type="ChEBI" id="CHEBI:18420"/>
        <label>3</label>
    </ligand>
</feature>
<feature type="binding site" evidence="1">
    <location>
        <position position="478"/>
    </location>
    <ligand>
        <name>Mg(2+)</name>
        <dbReference type="ChEBI" id="CHEBI:18420"/>
        <label>3</label>
    </ligand>
</feature>
<feature type="binding site" evidence="1">
    <location>
        <position position="482"/>
    </location>
    <ligand>
        <name>Mg(2+)</name>
        <dbReference type="ChEBI" id="CHEBI:18420"/>
        <label>3</label>
    </ligand>
</feature>
<feature type="sequence conflict" description="In Ref. 3; ABX09997." evidence="4" ref="3">
    <original>L</original>
    <variation>F</variation>
    <location>
        <position position="61"/>
    </location>
</feature>
<feature type="sequence conflict" description="In Ref. 2; AAX39387." evidence="4" ref="2">
    <original>NED</original>
    <variation>DEV</variation>
    <location>
        <begin position="248"/>
        <end position="250"/>
    </location>
</feature>
<feature type="sequence conflict" description="In Ref. 3; ABX09997." evidence="4" ref="3">
    <original>D</original>
    <variation>V</variation>
    <location>
        <position position="250"/>
    </location>
</feature>
<feature type="sequence conflict" description="In Ref. 3; ABX09997." evidence="4" ref="3">
    <original>M</original>
    <variation>I</variation>
    <location>
        <position position="361"/>
    </location>
</feature>
<keyword id="KW-0170">Cobalt</keyword>
<keyword id="KW-0963">Cytoplasm</keyword>
<keyword id="KW-0456">Lyase</keyword>
<keyword id="KW-0460">Magnesium</keyword>
<keyword id="KW-0464">Manganese</keyword>
<keyword id="KW-0479">Metal-binding</keyword>
<evidence type="ECO:0000250" key="1">
    <source>
        <dbReference type="UniProtKB" id="Q40577"/>
    </source>
</evidence>
<evidence type="ECO:0000269" key="2">
    <source>
    </source>
</evidence>
<evidence type="ECO:0000269" key="3">
    <source>
    </source>
</evidence>
<evidence type="ECO:0000305" key="4"/>
<reference key="1">
    <citation type="journal article" date="2000" name="Plant Sci.">
        <title>Cloning and molecular analysis of two new sesquiterpene cyclases from Artemisia annua L.</title>
        <authorList>
            <person name="Van Geldre E."/>
            <person name="De Pauw I."/>
            <person name="Inze D."/>
            <person name="Van Montagu M."/>
            <person name="Van den Eeckhout E."/>
        </authorList>
    </citation>
    <scope>NUCLEOTIDE SEQUENCE [MRNA]</scope>
    <scope>TISSUE SPECIFICITY</scope>
    <source>
        <tissue>Flower</tissue>
        <tissue>Leaf</tissue>
    </source>
</reference>
<reference key="2">
    <citation type="journal article" date="2005" name="Phytochemistry">
        <title>Expression, purification and characterization of recombinant (E)-beta-farnesene synthase from Artemisia annua.</title>
        <authorList>
            <person name="Picaud S."/>
            <person name="Brodelius M."/>
            <person name="Brodelius P.E."/>
        </authorList>
    </citation>
    <scope>NUCLEOTIDE SEQUENCE [MRNA]</scope>
    <scope>FUNCTION</scope>
    <scope>CATALYTIC ACTIVITY</scope>
    <scope>BIOPHYSICOCHEMICAL PROPERTIES</scope>
    <scope>COFACTOR</scope>
    <scope>ACTIVITY REGULATION</scope>
</reference>
<reference key="3">
    <citation type="submission" date="2007-10" db="EMBL/GenBank/DDBJ databases">
        <title>Molecular cloning, characterization and transient expression of sesquiterpene cyclase for increasing Artemisinin from Iranian Artemisia annua.</title>
        <authorList>
            <person name="Mirzaee H."/>
            <person name="Hashemi Sohi H."/>
            <person name="Sharafi A."/>
        </authorList>
    </citation>
    <scope>NUCLEOTIDE SEQUENCE [MRNA]</scope>
</reference>
<gene>
    <name type="primary">CASC125</name>
</gene>
<accession>Q9FXY7</accession>
<accession>A9LPA6</accession>
<accession>Q4VM12</accession>
<organism>
    <name type="scientific">Artemisia annua</name>
    <name type="common">Sweet wormwood</name>
    <dbReference type="NCBI Taxonomy" id="35608"/>
    <lineage>
        <taxon>Eukaryota</taxon>
        <taxon>Viridiplantae</taxon>
        <taxon>Streptophyta</taxon>
        <taxon>Embryophyta</taxon>
        <taxon>Tracheophyta</taxon>
        <taxon>Spermatophyta</taxon>
        <taxon>Magnoliopsida</taxon>
        <taxon>eudicotyledons</taxon>
        <taxon>Gunneridae</taxon>
        <taxon>Pentapetalae</taxon>
        <taxon>asterids</taxon>
        <taxon>campanulids</taxon>
        <taxon>Asterales</taxon>
        <taxon>Asteraceae</taxon>
        <taxon>Asteroideae</taxon>
        <taxon>Anthemideae</taxon>
        <taxon>Artemisiinae</taxon>
        <taxon>Artemisia</taxon>
    </lineage>
</organism>
<sequence length="577" mass="66722">MSTLPISSVSFSSSTSPLVVDDKVSTKPDVIRHTMNFNASIWGDQFLTYDEPEDLVMKKQLVEELKEEVKKELITIKGSNEPMQHVKLIELIDAVQRLGIAYHFEEEIEEALQHIHVTYGEQWVDKENLQSISLWFRLLRQQGFNVSSGVFKDFMDEKGKFKESLCNDAQGILALYEAAFMRVEDETILDNALEFTKVHLDIIAKDPSCDSSLRTQIHQALKQPLRRRLARIEALHYMPIYQQETSHNEDLLKLAKLDFSVLQSMHKKELSHICKWWKDLDLQNKLPYVRDRVVEGYFWILSIYYEPQHARTRMFLMKTCMWLVVLDDTFDNYGTYEELEIFTQAVERWSISCLDMLPEYMKLIYQELVNLHVEMEESLGKGGKNISNSLCQGRWQKELGSQITLVETKMAKRGVHAQPLEEYMSVSMVTGTYGLMIARSYVGRGDIVTEDTFKWVSSYPPIIKASCVIVRLMDDIVSHKEEQERGHVASSIECYSKESGASEEEACEYISRKVEDAWKVINRESLRPTAVPFPLLMPAINLARMCEVLYSVNDGFTHAEGDMKSYMKSFFVHPMVV</sequence>